<reference key="1">
    <citation type="journal article" date="1991" name="Mol. Cell. Biol.">
        <title>Suppressor analysis of temperature-sensitive mutations of the largest subunit of RNA polymerase I in Saccharomyces cerevisiae: a suppressor gene encodes the second-largest subunit of RNA polymerase I.</title>
        <authorList>
            <person name="Yano R."/>
            <person name="Nomura M."/>
        </authorList>
    </citation>
    <scope>NUCLEOTIDE SEQUENCE [GENOMIC DNA]</scope>
    <scope>PROTEIN SEQUENCE OF 971-989 AND 1003-1020</scope>
</reference>
<reference key="2">
    <citation type="journal article" date="1997" name="Nature">
        <title>The nucleotide sequence of Saccharomyces cerevisiae chromosome XVI.</title>
        <authorList>
            <person name="Bussey H."/>
            <person name="Storms R.K."/>
            <person name="Ahmed A."/>
            <person name="Albermann K."/>
            <person name="Allen E."/>
            <person name="Ansorge W."/>
            <person name="Araujo R."/>
            <person name="Aparicio A."/>
            <person name="Barrell B.G."/>
            <person name="Badcock K."/>
            <person name="Benes V."/>
            <person name="Botstein D."/>
            <person name="Bowman S."/>
            <person name="Brueckner M."/>
            <person name="Carpenter J."/>
            <person name="Cherry J.M."/>
            <person name="Chung E."/>
            <person name="Churcher C.M."/>
            <person name="Coster F."/>
            <person name="Davis K."/>
            <person name="Davis R.W."/>
            <person name="Dietrich F.S."/>
            <person name="Delius H."/>
            <person name="DiPaolo T."/>
            <person name="Dubois E."/>
            <person name="Duesterhoeft A."/>
            <person name="Duncan M."/>
            <person name="Floeth M."/>
            <person name="Fortin N."/>
            <person name="Friesen J.D."/>
            <person name="Fritz C."/>
            <person name="Goffeau A."/>
            <person name="Hall J."/>
            <person name="Hebling U."/>
            <person name="Heumann K."/>
            <person name="Hilbert H."/>
            <person name="Hillier L.W."/>
            <person name="Hunicke-Smith S."/>
            <person name="Hyman R.W."/>
            <person name="Johnston M."/>
            <person name="Kalman S."/>
            <person name="Kleine K."/>
            <person name="Komp C."/>
            <person name="Kurdi O."/>
            <person name="Lashkari D."/>
            <person name="Lew H."/>
            <person name="Lin A."/>
            <person name="Lin D."/>
            <person name="Louis E.J."/>
            <person name="Marathe R."/>
            <person name="Messenguy F."/>
            <person name="Mewes H.-W."/>
            <person name="Mirtipati S."/>
            <person name="Moestl D."/>
            <person name="Mueller-Auer S."/>
            <person name="Namath A."/>
            <person name="Nentwich U."/>
            <person name="Oefner P."/>
            <person name="Pearson D."/>
            <person name="Petel F.X."/>
            <person name="Pohl T.M."/>
            <person name="Purnelle B."/>
            <person name="Rajandream M.A."/>
            <person name="Rechmann S."/>
            <person name="Rieger M."/>
            <person name="Riles L."/>
            <person name="Roberts D."/>
            <person name="Schaefer M."/>
            <person name="Scharfe M."/>
            <person name="Scherens B."/>
            <person name="Schramm S."/>
            <person name="Schroeder M."/>
            <person name="Sdicu A.-M."/>
            <person name="Tettelin H."/>
            <person name="Urrestarazu L.A."/>
            <person name="Ushinsky S."/>
            <person name="Vierendeels F."/>
            <person name="Vissers S."/>
            <person name="Voss H."/>
            <person name="Walsh S.V."/>
            <person name="Wambutt R."/>
            <person name="Wang Y."/>
            <person name="Wedler E."/>
            <person name="Wedler H."/>
            <person name="Winnett E."/>
            <person name="Zhong W.-W."/>
            <person name="Zollner A."/>
            <person name="Vo D.H."/>
            <person name="Hani J."/>
        </authorList>
    </citation>
    <scope>NUCLEOTIDE SEQUENCE [LARGE SCALE GENOMIC DNA]</scope>
    <source>
        <strain>ATCC 204508 / S288c</strain>
    </source>
</reference>
<reference key="3">
    <citation type="journal article" date="2014" name="G3 (Bethesda)">
        <title>The reference genome sequence of Saccharomyces cerevisiae: Then and now.</title>
        <authorList>
            <person name="Engel S.R."/>
            <person name="Dietrich F.S."/>
            <person name="Fisk D.G."/>
            <person name="Binkley G."/>
            <person name="Balakrishnan R."/>
            <person name="Costanzo M.C."/>
            <person name="Dwight S.S."/>
            <person name="Hitz B.C."/>
            <person name="Karra K."/>
            <person name="Nash R.S."/>
            <person name="Weng S."/>
            <person name="Wong E.D."/>
            <person name="Lloyd P."/>
            <person name="Skrzypek M.S."/>
            <person name="Miyasato S.R."/>
            <person name="Simison M."/>
            <person name="Cherry J.M."/>
        </authorList>
    </citation>
    <scope>GENOME REANNOTATION</scope>
    <source>
        <strain>ATCC 204508 / S288c</strain>
    </source>
</reference>
<reference key="4">
    <citation type="journal article" date="2001" name="Proc. Natl. Acad. Sci. U.S.A.">
        <title>Differential roles of phosphorylation in the formation of transcriptional active RNA polymerase I.</title>
        <authorList>
            <person name="Fath S."/>
            <person name="Milkereit P."/>
            <person name="Peyroche G."/>
            <person name="Riva M."/>
            <person name="Carles C."/>
            <person name="Tschochner H."/>
        </authorList>
    </citation>
    <scope>IDENTIFICATION IN THE RNA POL I COMPLEX</scope>
</reference>
<reference key="5">
    <citation type="journal article" date="2008" name="Mol. Cell. Proteomics">
        <title>A multidimensional chromatography technology for in-depth phosphoproteome analysis.</title>
        <authorList>
            <person name="Albuquerque C.P."/>
            <person name="Smolka M.B."/>
            <person name="Payne S.H."/>
            <person name="Bafna V."/>
            <person name="Eng J."/>
            <person name="Zhou H."/>
        </authorList>
    </citation>
    <scope>PHOSPHORYLATION [LARGE SCALE ANALYSIS] AT SER-81</scope>
    <scope>IDENTIFICATION BY MASS SPECTROMETRY [LARGE SCALE ANALYSIS]</scope>
</reference>
<reference key="6">
    <citation type="journal article" date="2009" name="Science">
        <title>Global analysis of Cdk1 substrate phosphorylation sites provides insights into evolution.</title>
        <authorList>
            <person name="Holt L.J."/>
            <person name="Tuch B.B."/>
            <person name="Villen J."/>
            <person name="Johnson A.D."/>
            <person name="Gygi S.P."/>
            <person name="Morgan D.O."/>
        </authorList>
    </citation>
    <scope>PHOSPHORYLATION [LARGE SCALE ANALYSIS] AT SER-81 AND SER-1156</scope>
    <scope>IDENTIFICATION BY MASS SPECTROMETRY [LARGE SCALE ANALYSIS]</scope>
</reference>
<reference key="7">
    <citation type="journal article" date="2012" name="Proc. Natl. Acad. Sci. U.S.A.">
        <title>N-terminal acetylome analyses and functional insights of the N-terminal acetyltransferase NatB.</title>
        <authorList>
            <person name="Van Damme P."/>
            <person name="Lasa M."/>
            <person name="Polevoda B."/>
            <person name="Gazquez C."/>
            <person name="Elosegui-Artola A."/>
            <person name="Kim D.S."/>
            <person name="De Juan-Pardo E."/>
            <person name="Demeyer K."/>
            <person name="Hole K."/>
            <person name="Larrea E."/>
            <person name="Timmerman E."/>
            <person name="Prieto J."/>
            <person name="Arnesen T."/>
            <person name="Sherman F."/>
            <person name="Gevaert K."/>
            <person name="Aldabe R."/>
        </authorList>
    </citation>
    <scope>ACETYLATION [LARGE SCALE ANALYSIS] AT SER-2</scope>
    <scope>CLEAVAGE OF INITIATOR METHIONINE [LARGE SCALE ANALYSIS]</scope>
    <scope>IDENTIFICATION BY MASS SPECTROMETRY [LARGE SCALE ANALYSIS]</scope>
</reference>
<reference key="8">
    <citation type="journal article" date="2002" name="EMBO J.">
        <title>Localization of the yeast RNA polymerase I-specific subunits.</title>
        <authorList>
            <person name="Bischler N."/>
            <person name="Brino L."/>
            <person name="Carles C."/>
            <person name="Riva M."/>
            <person name="Tschochner H."/>
            <person name="Mallouh V."/>
            <person name="Schultz P."/>
        </authorList>
    </citation>
    <scope>ELECTRON MICROSCOPY OF THE RNA POLYMERASE I COMPLEX</scope>
</reference>
<reference key="9">
    <citation type="journal article" date="2002" name="Mol. Microbiol.">
        <title>Rpa12p, a conserved RNA polymerase I subunit with two functional domains.</title>
        <authorList>
            <person name="Van Mullem V."/>
            <person name="Landrieux E."/>
            <person name="Vandenhaute J."/>
            <person name="Thuriaux P."/>
        </authorList>
    </citation>
    <scope>IDENTIFICATION IN THE RNA POL I COMPLEX</scope>
</reference>
<reference key="10">
    <citation type="journal article" date="2002" name="Proc. Natl. Acad. Sci. U.S.A.">
        <title>The A14-A43 heterodimer subunit in yeast RNA pol I and their relationship to Rpb4-Rpb7 pol II subunits.</title>
        <authorList>
            <person name="Peyroche G."/>
            <person name="Levillain E."/>
            <person name="Siaut M."/>
            <person name="Callebaut I."/>
            <person name="Schultz P."/>
            <person name="Sentenac A."/>
            <person name="Riva M."/>
            <person name="Carles C."/>
        </authorList>
    </citation>
    <scope>IDENTIFICATION IN THE RNA POL I COMPLEX</scope>
</reference>
<reference key="11">
    <citation type="journal article" date="2003" name="Eukaryot. Cell">
        <title>Role of second-largest RNA polymerase I subunit Zn-binding domain in enzyme assembly.</title>
        <authorList>
            <person name="Naryshkina T."/>
            <person name="Bruning A."/>
            <person name="Gadal O."/>
            <person name="Severinov K."/>
        </authorList>
    </citation>
    <scope>SUBCELLULAR LOCATION</scope>
    <scope>MUTAGENESIS OF CYS-1104; CYS-1107; CYS-1128 AND CYS-1131</scope>
</reference>
<reference key="12">
    <citation type="journal article" date="2003" name="Nature">
        <title>Global analysis of protein localization in budding yeast.</title>
        <authorList>
            <person name="Huh W.-K."/>
            <person name="Falvo J.V."/>
            <person name="Gerke L.C."/>
            <person name="Carroll A.S."/>
            <person name="Howson R.W."/>
            <person name="Weissman J.S."/>
            <person name="O'Shea E.K."/>
        </authorList>
    </citation>
    <scope>SUBCELLULAR LOCATION [LARGE SCALE ANALYSIS]</scope>
</reference>
<reference key="13">
    <citation type="journal article" date="2003" name="Nature">
        <title>Global analysis of protein expression in yeast.</title>
        <authorList>
            <person name="Ghaemmaghami S."/>
            <person name="Huh W.-K."/>
            <person name="Bower K."/>
            <person name="Howson R.W."/>
            <person name="Belle A."/>
            <person name="Dephoure N."/>
            <person name="O'Shea E.K."/>
            <person name="Weissman J.S."/>
        </authorList>
    </citation>
    <scope>LEVEL OF PROTEIN EXPRESSION [LARGE SCALE ANALYSIS]</scope>
</reference>
<reference key="14">
    <citation type="journal article" date="2007" name="Cell">
        <title>Functional architecture of RNA polymerase I.</title>
        <authorList>
            <person name="Kuhn C.D."/>
            <person name="Geiger S.R."/>
            <person name="Baumli S."/>
            <person name="Gartmann M."/>
            <person name="Gerber J."/>
            <person name="Jennebach S."/>
            <person name="Mielke T."/>
            <person name="Tschochner H."/>
            <person name="Beckmann R."/>
            <person name="Cramer P."/>
        </authorList>
    </citation>
    <scope>STRUCTURE BY ELECTRON MICROSCOPY (12.00 ANGSTROMS) OF THE POL I COMPLEX</scope>
    <scope>FUNCTION</scope>
    <scope>CATALYTIC ACTIVITY</scope>
    <scope>SUBUNIT</scope>
</reference>
<reference key="15">
    <citation type="journal article" date="2013" name="Nature">
        <title>Crystal structure of the 14-subunit RNA polymerase I.</title>
        <authorList>
            <person name="Fernandez-Tornero C."/>
            <person name="Moreno-Morcillo M."/>
            <person name="Rashid U.J."/>
            <person name="Taylor N.M."/>
            <person name="Ruiz F.M."/>
            <person name="Gruene T."/>
            <person name="Legrand P."/>
            <person name="Steuerwald U."/>
            <person name="Muller C.W."/>
        </authorList>
    </citation>
    <scope>X-RAY CRYSTALLOGRAPHY (3.0 ANGSTROMS) OF THE POL I COMPLEX IN COMPLEX WITH ZINC IONS</scope>
    <scope>FUNCTION</scope>
    <scope>CATALYTIC ACTIVITY</scope>
    <scope>ZINC-BINDING</scope>
    <scope>SUBUNIT</scope>
</reference>
<reference key="16">
    <citation type="journal article" date="2013" name="Nature">
        <title>RNA polymerase I structure and transcription regulation.</title>
        <authorList>
            <person name="Engel C."/>
            <person name="Sainsbury S."/>
            <person name="Cheung A.C."/>
            <person name="Kostrewa D."/>
            <person name="Cramer P."/>
        </authorList>
    </citation>
    <scope>X-RAY CRYSTALLOGRAPHY (2.8 ANGSTROMS) OF THE POL I COMPLEX</scope>
    <scope>FUNCTION</scope>
    <scope>CATALYTIC ACTIVITY</scope>
    <scope>ZINC-BINDING</scope>
    <scope>SUBUNIT</scope>
</reference>
<dbReference type="EC" id="2.7.7.6" evidence="7 8 9"/>
<dbReference type="EMBL" id="U31900">
    <property type="protein sequence ID" value="AAA97589.1"/>
    <property type="molecule type" value="Genomic_DNA"/>
</dbReference>
<dbReference type="EMBL" id="M62804">
    <property type="protein sequence ID" value="AAA34993.1"/>
    <property type="molecule type" value="Genomic_DNA"/>
</dbReference>
<dbReference type="EMBL" id="Z49919">
    <property type="protein sequence ID" value="CAA90154.1"/>
    <property type="molecule type" value="Genomic_DNA"/>
</dbReference>
<dbReference type="EMBL" id="Z71255">
    <property type="protein sequence ID" value="CAA95050.1"/>
    <property type="molecule type" value="Genomic_DNA"/>
</dbReference>
<dbReference type="EMBL" id="BK006949">
    <property type="protein sequence ID" value="DAA11437.1"/>
    <property type="molecule type" value="Genomic_DNA"/>
</dbReference>
<dbReference type="PIR" id="A39607">
    <property type="entry name" value="A39607"/>
</dbReference>
<dbReference type="RefSeq" id="NP_015335.1">
    <property type="nucleotide sequence ID" value="NM_001184107.1"/>
</dbReference>
<dbReference type="PDB" id="4C2M">
    <property type="method" value="X-ray"/>
    <property type="resolution" value="2.80 A"/>
    <property type="chains" value="B/Q=1-1203"/>
</dbReference>
<dbReference type="PDB" id="4C3H">
    <property type="method" value="X-ray"/>
    <property type="resolution" value="3.27 A"/>
    <property type="chains" value="B=1-1203"/>
</dbReference>
<dbReference type="PDB" id="4C3I">
    <property type="method" value="X-ray"/>
    <property type="resolution" value="3.00 A"/>
    <property type="chains" value="B=1-1203"/>
</dbReference>
<dbReference type="PDB" id="4C3J">
    <property type="method" value="X-ray"/>
    <property type="resolution" value="3.35 A"/>
    <property type="chains" value="B=1-1203"/>
</dbReference>
<dbReference type="PDB" id="4YM7">
    <property type="method" value="X-ray"/>
    <property type="resolution" value="5.50 A"/>
    <property type="chains" value="AB/BB/CB/DB/EB/FB=1-1203"/>
</dbReference>
<dbReference type="PDB" id="5G5L">
    <property type="method" value="EM"/>
    <property type="resolution" value="4.80 A"/>
    <property type="chains" value="B=1-1203"/>
</dbReference>
<dbReference type="PDB" id="5LMX">
    <property type="method" value="EM"/>
    <property type="resolution" value="4.90 A"/>
    <property type="chains" value="B=1-1203"/>
</dbReference>
<dbReference type="PDB" id="5M3F">
    <property type="method" value="EM"/>
    <property type="resolution" value="3.80 A"/>
    <property type="chains" value="B=1-1203"/>
</dbReference>
<dbReference type="PDB" id="5M3M">
    <property type="method" value="EM"/>
    <property type="resolution" value="4.00 A"/>
    <property type="chains" value="B=1-1203"/>
</dbReference>
<dbReference type="PDB" id="5M5W">
    <property type="method" value="EM"/>
    <property type="resolution" value="3.80 A"/>
    <property type="chains" value="B=1-1203"/>
</dbReference>
<dbReference type="PDB" id="5M5X">
    <property type="method" value="EM"/>
    <property type="resolution" value="4.00 A"/>
    <property type="chains" value="B=1-1203"/>
</dbReference>
<dbReference type="PDB" id="5M5Y">
    <property type="method" value="EM"/>
    <property type="resolution" value="4.00 A"/>
    <property type="chains" value="B=1-1203"/>
</dbReference>
<dbReference type="PDB" id="5M64">
    <property type="method" value="EM"/>
    <property type="resolution" value="4.60 A"/>
    <property type="chains" value="B=1-1203"/>
</dbReference>
<dbReference type="PDB" id="5N5Y">
    <property type="method" value="EM"/>
    <property type="resolution" value="7.70 A"/>
    <property type="chains" value="B=1-1203"/>
</dbReference>
<dbReference type="PDB" id="5N5Z">
    <property type="method" value="EM"/>
    <property type="resolution" value="7.70 A"/>
    <property type="chains" value="B=1-1203"/>
</dbReference>
<dbReference type="PDB" id="5N60">
    <property type="method" value="EM"/>
    <property type="resolution" value="7.70 A"/>
    <property type="chains" value="B=1-1203"/>
</dbReference>
<dbReference type="PDB" id="5N61">
    <property type="method" value="EM"/>
    <property type="resolution" value="3.40 A"/>
    <property type="chains" value="B=1-1203"/>
</dbReference>
<dbReference type="PDB" id="5OA1">
    <property type="method" value="EM"/>
    <property type="resolution" value="4.40 A"/>
    <property type="chains" value="B=1-1203"/>
</dbReference>
<dbReference type="PDB" id="5W5Y">
    <property type="method" value="EM"/>
    <property type="resolution" value="3.80 A"/>
    <property type="chains" value="B=1-1203"/>
</dbReference>
<dbReference type="PDB" id="5W64">
    <property type="method" value="EM"/>
    <property type="resolution" value="4.20 A"/>
    <property type="chains" value="B=1-1203"/>
</dbReference>
<dbReference type="PDB" id="5W65">
    <property type="method" value="EM"/>
    <property type="resolution" value="4.30 A"/>
    <property type="chains" value="B=1-1203"/>
</dbReference>
<dbReference type="PDB" id="5W66">
    <property type="method" value="EM"/>
    <property type="resolution" value="3.90 A"/>
    <property type="chains" value="B=1-1203"/>
</dbReference>
<dbReference type="PDB" id="6H67">
    <property type="method" value="EM"/>
    <property type="resolution" value="3.60 A"/>
    <property type="chains" value="B=1-1203"/>
</dbReference>
<dbReference type="PDB" id="6H68">
    <property type="method" value="EM"/>
    <property type="resolution" value="4.60 A"/>
    <property type="chains" value="B=1-1203"/>
</dbReference>
<dbReference type="PDB" id="6HKO">
    <property type="method" value="EM"/>
    <property type="resolution" value="3.42 A"/>
    <property type="chains" value="B=1-1203"/>
</dbReference>
<dbReference type="PDB" id="6HLQ">
    <property type="method" value="EM"/>
    <property type="resolution" value="3.18 A"/>
    <property type="chains" value="B=1-1203"/>
</dbReference>
<dbReference type="PDB" id="6HLR">
    <property type="method" value="EM"/>
    <property type="resolution" value="3.18 A"/>
    <property type="chains" value="B=1-1203"/>
</dbReference>
<dbReference type="PDB" id="6HLS">
    <property type="method" value="EM"/>
    <property type="resolution" value="3.21 A"/>
    <property type="chains" value="B=1-1203"/>
</dbReference>
<dbReference type="PDB" id="6RQH">
    <property type="method" value="EM"/>
    <property type="resolution" value="3.70 A"/>
    <property type="chains" value="B=1-1203"/>
</dbReference>
<dbReference type="PDB" id="6RQL">
    <property type="method" value="EM"/>
    <property type="resolution" value="2.90 A"/>
    <property type="chains" value="B=1-1203"/>
</dbReference>
<dbReference type="PDB" id="6RQT">
    <property type="method" value="EM"/>
    <property type="resolution" value="4.00 A"/>
    <property type="chains" value="B=1-1203"/>
</dbReference>
<dbReference type="PDB" id="6RRD">
    <property type="method" value="EM"/>
    <property type="resolution" value="3.10 A"/>
    <property type="chains" value="B=1-1203"/>
</dbReference>
<dbReference type="PDB" id="6RUI">
    <property type="method" value="EM"/>
    <property type="resolution" value="2.70 A"/>
    <property type="chains" value="B=1-1203"/>
</dbReference>
<dbReference type="PDB" id="6RUO">
    <property type="method" value="EM"/>
    <property type="resolution" value="3.50 A"/>
    <property type="chains" value="B=1-1203"/>
</dbReference>
<dbReference type="PDB" id="6RWE">
    <property type="method" value="EM"/>
    <property type="resolution" value="3.00 A"/>
    <property type="chains" value="B=1-1203"/>
</dbReference>
<dbReference type="PDB" id="6TPS">
    <property type="method" value="EM"/>
    <property type="resolution" value="3.54 A"/>
    <property type="chains" value="B=1-1203"/>
</dbReference>
<dbReference type="PDBsum" id="4C2M"/>
<dbReference type="PDBsum" id="4C3H"/>
<dbReference type="PDBsum" id="4C3I"/>
<dbReference type="PDBsum" id="4C3J"/>
<dbReference type="PDBsum" id="4YM7"/>
<dbReference type="PDBsum" id="5G5L"/>
<dbReference type="PDBsum" id="5LMX"/>
<dbReference type="PDBsum" id="5M3F"/>
<dbReference type="PDBsum" id="5M3M"/>
<dbReference type="PDBsum" id="5M5W"/>
<dbReference type="PDBsum" id="5M5X"/>
<dbReference type="PDBsum" id="5M5Y"/>
<dbReference type="PDBsum" id="5M64"/>
<dbReference type="PDBsum" id="5N5Y"/>
<dbReference type="PDBsum" id="5N5Z"/>
<dbReference type="PDBsum" id="5N60"/>
<dbReference type="PDBsum" id="5N61"/>
<dbReference type="PDBsum" id="5OA1"/>
<dbReference type="PDBsum" id="5W5Y"/>
<dbReference type="PDBsum" id="5W64"/>
<dbReference type="PDBsum" id="5W65"/>
<dbReference type="PDBsum" id="5W66"/>
<dbReference type="PDBsum" id="6H67"/>
<dbReference type="PDBsum" id="6H68"/>
<dbReference type="PDBsum" id="6HKO"/>
<dbReference type="PDBsum" id="6HLQ"/>
<dbReference type="PDBsum" id="6HLR"/>
<dbReference type="PDBsum" id="6HLS"/>
<dbReference type="PDBsum" id="6RQH"/>
<dbReference type="PDBsum" id="6RQL"/>
<dbReference type="PDBsum" id="6RQT"/>
<dbReference type="PDBsum" id="6RRD"/>
<dbReference type="PDBsum" id="6RUI"/>
<dbReference type="PDBsum" id="6RUO"/>
<dbReference type="PDBsum" id="6RWE"/>
<dbReference type="PDBsum" id="6TPS"/>
<dbReference type="EMDB" id="EMD-0146"/>
<dbReference type="EMDB" id="EMD-0147"/>
<dbReference type="EMDB" id="EMD-0238"/>
<dbReference type="EMDB" id="EMD-0239"/>
<dbReference type="EMDB" id="EMD-0240"/>
<dbReference type="EMDB" id="EMD-0241"/>
<dbReference type="EMDB" id="EMD-10006"/>
<dbReference type="EMDB" id="EMD-10007"/>
<dbReference type="EMDB" id="EMD-10038"/>
<dbReference type="EMDB" id="EMD-10544"/>
<dbReference type="EMDB" id="EMD-3446"/>
<dbReference type="EMDB" id="EMD-3447"/>
<dbReference type="EMDB" id="EMD-3448"/>
<dbReference type="EMDB" id="EMD-3449"/>
<dbReference type="EMDB" id="EMD-3590"/>
<dbReference type="EMDB" id="EMD-3591"/>
<dbReference type="EMDB" id="EMD-3592"/>
<dbReference type="EMDB" id="EMD-3593"/>
<dbReference type="EMDB" id="EMD-3727"/>
<dbReference type="EMDB" id="EMD-4088"/>
<dbReference type="EMDB" id="EMD-4147"/>
<dbReference type="EMDB" id="EMD-4148"/>
<dbReference type="EMDB" id="EMD-4982"/>
<dbReference type="EMDB" id="EMD-4984"/>
<dbReference type="EMDB" id="EMD-4985"/>
<dbReference type="EMDB" id="EMD-4987"/>
<dbReference type="EMDB" id="EMD-8771"/>
<dbReference type="EMDB" id="EMD-8773"/>
<dbReference type="EMDB" id="EMD-8774"/>
<dbReference type="EMDB" id="EMD-8775"/>
<dbReference type="EMDB" id="EMD-8776"/>
<dbReference type="EMDB" id="EMD-8777"/>
<dbReference type="SMR" id="P22138"/>
<dbReference type="BioGRID" id="36188">
    <property type="interactions" value="208"/>
</dbReference>
<dbReference type="ComplexPortal" id="CPX-1664">
    <property type="entry name" value="DNA-directed RNA Polymerase I complex"/>
</dbReference>
<dbReference type="DIP" id="DIP-135N"/>
<dbReference type="FunCoup" id="P22138">
    <property type="interactions" value="1217"/>
</dbReference>
<dbReference type="IntAct" id="P22138">
    <property type="interactions" value="75"/>
</dbReference>
<dbReference type="MINT" id="P22138"/>
<dbReference type="STRING" id="4932.YPR010C"/>
<dbReference type="GlyGen" id="P22138">
    <property type="glycosylation" value="1 site"/>
</dbReference>
<dbReference type="iPTMnet" id="P22138"/>
<dbReference type="PaxDb" id="4932-YPR010C"/>
<dbReference type="PeptideAtlas" id="P22138"/>
<dbReference type="EnsemblFungi" id="YPR010C_mRNA">
    <property type="protein sequence ID" value="YPR010C"/>
    <property type="gene ID" value="YPR010C"/>
</dbReference>
<dbReference type="GeneID" id="856119"/>
<dbReference type="KEGG" id="sce:YPR010C"/>
<dbReference type="AGR" id="SGD:S000006214"/>
<dbReference type="SGD" id="S000006214">
    <property type="gene designation" value="RPA135"/>
</dbReference>
<dbReference type="VEuPathDB" id="FungiDB:YPR010C"/>
<dbReference type="eggNOG" id="KOG0216">
    <property type="taxonomic scope" value="Eukaryota"/>
</dbReference>
<dbReference type="GeneTree" id="ENSGT00950000183132"/>
<dbReference type="HOGENOM" id="CLU_000524_5_1_1"/>
<dbReference type="InParanoid" id="P22138"/>
<dbReference type="OMA" id="FFGVVHY"/>
<dbReference type="OrthoDB" id="10248617at2759"/>
<dbReference type="BioCyc" id="YEAST:G3O-34172-MONOMER"/>
<dbReference type="Reactome" id="R-SCE-73762">
    <property type="pathway name" value="RNA Polymerase I Transcription Initiation"/>
</dbReference>
<dbReference type="Reactome" id="R-SCE-73772">
    <property type="pathway name" value="RNA Polymerase I Promoter Escape"/>
</dbReference>
<dbReference type="BioGRID-ORCS" id="856119">
    <property type="hits" value="0 hits in 10 CRISPR screens"/>
</dbReference>
<dbReference type="CD-CODE" id="BDAE0F88">
    <property type="entry name" value="Nucleolus"/>
</dbReference>
<dbReference type="EvolutionaryTrace" id="P22138"/>
<dbReference type="PRO" id="PR:P22138"/>
<dbReference type="Proteomes" id="UP000002311">
    <property type="component" value="Chromosome XVI"/>
</dbReference>
<dbReference type="RNAct" id="P22138">
    <property type="molecule type" value="protein"/>
</dbReference>
<dbReference type="GO" id="GO:0005739">
    <property type="term" value="C:mitochondrion"/>
    <property type="evidence" value="ECO:0007669"/>
    <property type="project" value="GOC"/>
</dbReference>
<dbReference type="GO" id="GO:0005634">
    <property type="term" value="C:nucleus"/>
    <property type="evidence" value="ECO:0000314"/>
    <property type="project" value="ComplexPortal"/>
</dbReference>
<dbReference type="GO" id="GO:0005736">
    <property type="term" value="C:RNA polymerase I complex"/>
    <property type="evidence" value="ECO:0000314"/>
    <property type="project" value="UniProtKB"/>
</dbReference>
<dbReference type="GO" id="GO:0003677">
    <property type="term" value="F:DNA binding"/>
    <property type="evidence" value="ECO:0007669"/>
    <property type="project" value="InterPro"/>
</dbReference>
<dbReference type="GO" id="GO:0003899">
    <property type="term" value="F:DNA-directed RNA polymerase activity"/>
    <property type="evidence" value="ECO:0000314"/>
    <property type="project" value="UniProtKB"/>
</dbReference>
<dbReference type="GO" id="GO:0032549">
    <property type="term" value="F:ribonucleoside binding"/>
    <property type="evidence" value="ECO:0007669"/>
    <property type="project" value="InterPro"/>
</dbReference>
<dbReference type="GO" id="GO:0008270">
    <property type="term" value="F:zinc ion binding"/>
    <property type="evidence" value="ECO:0007669"/>
    <property type="project" value="UniProtKB-KW"/>
</dbReference>
<dbReference type="GO" id="GO:0042790">
    <property type="term" value="P:nucleolar large rRNA transcription by RNA polymerase I"/>
    <property type="evidence" value="ECO:0000314"/>
    <property type="project" value="ComplexPortal"/>
</dbReference>
<dbReference type="GO" id="GO:0042254">
    <property type="term" value="P:ribosome biogenesis"/>
    <property type="evidence" value="ECO:0007669"/>
    <property type="project" value="UniProtKB-KW"/>
</dbReference>
<dbReference type="GO" id="GO:0006363">
    <property type="term" value="P:termination of RNA polymerase I transcription"/>
    <property type="evidence" value="ECO:0000314"/>
    <property type="project" value="ComplexPortal"/>
</dbReference>
<dbReference type="GO" id="GO:0006360">
    <property type="term" value="P:transcription by RNA polymerase I"/>
    <property type="evidence" value="ECO:0000314"/>
    <property type="project" value="UniProtKB"/>
</dbReference>
<dbReference type="GO" id="GO:0006362">
    <property type="term" value="P:transcription elongation by RNA polymerase I"/>
    <property type="evidence" value="ECO:0000314"/>
    <property type="project" value="ComplexPortal"/>
</dbReference>
<dbReference type="GO" id="GO:0006361">
    <property type="term" value="P:transcription initiation at RNA polymerase I promoter"/>
    <property type="evidence" value="ECO:0000314"/>
    <property type="project" value="ComplexPortal"/>
</dbReference>
<dbReference type="CDD" id="cd00653">
    <property type="entry name" value="RNA_pol_B_RPB2"/>
    <property type="match status" value="1"/>
</dbReference>
<dbReference type="FunFam" id="2.40.270.10:FF:000011">
    <property type="entry name" value="DNA-directed RNA polymerase subunit beta"/>
    <property type="match status" value="1"/>
</dbReference>
<dbReference type="FunFam" id="2.40.50.150:FF:000004">
    <property type="entry name" value="DNA-directed RNA polymerase subunit beta"/>
    <property type="match status" value="1"/>
</dbReference>
<dbReference type="FunFam" id="3.90.1070.20:FF:000003">
    <property type="entry name" value="DNA-directed RNA polymerase subunit beta"/>
    <property type="match status" value="1"/>
</dbReference>
<dbReference type="FunFam" id="3.90.1100.10:FF:000008">
    <property type="entry name" value="DNA-directed RNA polymerase subunit beta"/>
    <property type="match status" value="1"/>
</dbReference>
<dbReference type="FunFam" id="3.90.1100.10:FF:000016">
    <property type="entry name" value="DNA-directed RNA polymerase subunit beta"/>
    <property type="match status" value="1"/>
</dbReference>
<dbReference type="FunFam" id="3.90.1110.10:FF:000007">
    <property type="entry name" value="DNA-directed RNA polymerase subunit beta"/>
    <property type="match status" value="1"/>
</dbReference>
<dbReference type="FunFam" id="3.90.1800.10:FF:000007">
    <property type="entry name" value="DNA-directed RNA polymerase subunit beta"/>
    <property type="match status" value="1"/>
</dbReference>
<dbReference type="Gene3D" id="2.40.50.150">
    <property type="match status" value="1"/>
</dbReference>
<dbReference type="Gene3D" id="3.90.1070.20">
    <property type="match status" value="1"/>
</dbReference>
<dbReference type="Gene3D" id="3.90.1100.10">
    <property type="match status" value="1"/>
</dbReference>
<dbReference type="Gene3D" id="2.40.270.10">
    <property type="entry name" value="DNA-directed RNA polymerase, subunit 2, domain 6"/>
    <property type="match status" value="1"/>
</dbReference>
<dbReference type="Gene3D" id="3.90.1800.10">
    <property type="entry name" value="RNA polymerase alpha subunit dimerisation domain"/>
    <property type="match status" value="1"/>
</dbReference>
<dbReference type="Gene3D" id="3.90.1110.10">
    <property type="entry name" value="RNA polymerase Rpb2, domain 2"/>
    <property type="match status" value="1"/>
</dbReference>
<dbReference type="InterPro" id="IPR015712">
    <property type="entry name" value="DNA-dir_RNA_pol_su2"/>
</dbReference>
<dbReference type="InterPro" id="IPR007120">
    <property type="entry name" value="DNA-dir_RNAP_su2_dom"/>
</dbReference>
<dbReference type="InterPro" id="IPR037033">
    <property type="entry name" value="DNA-dir_RNAP_su2_hyb_sf"/>
</dbReference>
<dbReference type="InterPro" id="IPR007121">
    <property type="entry name" value="RNA_pol_bsu_CS"/>
</dbReference>
<dbReference type="InterPro" id="IPR007644">
    <property type="entry name" value="RNA_pol_bsu_protrusion"/>
</dbReference>
<dbReference type="InterPro" id="IPR007642">
    <property type="entry name" value="RNA_pol_Rpb2_2"/>
</dbReference>
<dbReference type="InterPro" id="IPR037034">
    <property type="entry name" value="RNA_pol_Rpb2_2_sf"/>
</dbReference>
<dbReference type="InterPro" id="IPR007645">
    <property type="entry name" value="RNA_pol_Rpb2_3"/>
</dbReference>
<dbReference type="InterPro" id="IPR007641">
    <property type="entry name" value="RNA_pol_Rpb2_7"/>
</dbReference>
<dbReference type="InterPro" id="IPR014724">
    <property type="entry name" value="RNA_pol_RPB2_OB-fold"/>
</dbReference>
<dbReference type="InterPro" id="IPR009674">
    <property type="entry name" value="Rpa2_dom_4"/>
</dbReference>
<dbReference type="PANTHER" id="PTHR20856">
    <property type="entry name" value="DNA-DIRECTED RNA POLYMERASE I SUBUNIT 2"/>
    <property type="match status" value="1"/>
</dbReference>
<dbReference type="Pfam" id="PF06883">
    <property type="entry name" value="RNA_pol_Rpa2_4"/>
    <property type="match status" value="1"/>
</dbReference>
<dbReference type="Pfam" id="PF04563">
    <property type="entry name" value="RNA_pol_Rpb2_1"/>
    <property type="match status" value="1"/>
</dbReference>
<dbReference type="Pfam" id="PF04561">
    <property type="entry name" value="RNA_pol_Rpb2_2"/>
    <property type="match status" value="1"/>
</dbReference>
<dbReference type="Pfam" id="PF04565">
    <property type="entry name" value="RNA_pol_Rpb2_3"/>
    <property type="match status" value="1"/>
</dbReference>
<dbReference type="Pfam" id="PF00562">
    <property type="entry name" value="RNA_pol_Rpb2_6"/>
    <property type="match status" value="1"/>
</dbReference>
<dbReference type="Pfam" id="PF04560">
    <property type="entry name" value="RNA_pol_Rpb2_7"/>
    <property type="match status" value="1"/>
</dbReference>
<dbReference type="SUPFAM" id="SSF64484">
    <property type="entry name" value="beta and beta-prime subunits of DNA dependent RNA-polymerase"/>
    <property type="match status" value="1"/>
</dbReference>
<dbReference type="PROSITE" id="PS01166">
    <property type="entry name" value="RNA_POL_BETA"/>
    <property type="match status" value="1"/>
</dbReference>
<comment type="function">
    <text evidence="7 8 9">DNA-dependent RNA polymerases catalyze the transcription of DNA into RNA using the four ribonucleoside triphosphates as substrates. Component of RNA polymerase I (Pol I) which synthesizes ribosomal RNA precursors. Besides, RNA polymerase I has intrinsic RNA cleavage activity. RPA190 and RPA135 both contribute to the polymerase catalytic activity and together form the Pol I active center. In addition, subunit RPA12 contributes a catalytic zinc ribbon that is required for RNA cleavage by Pol I. A single stranded DNA template strand of the promoter is positioned within the central active site cleft of Pol I. A bridging helix emanates from RPA190 and crosses the cleft near the catalytic site and is thought to promote translocation of Pol I by acting as a ratchet that moves the RNA-DNA hybrid through the active site by switching from straight to bent conformations at each step of nucleotide addition.</text>
</comment>
<comment type="catalytic activity">
    <reaction evidence="7 8 9">
        <text>RNA(n) + a ribonucleoside 5'-triphosphate = RNA(n+1) + diphosphate</text>
        <dbReference type="Rhea" id="RHEA:21248"/>
        <dbReference type="Rhea" id="RHEA-COMP:14527"/>
        <dbReference type="Rhea" id="RHEA-COMP:17342"/>
        <dbReference type="ChEBI" id="CHEBI:33019"/>
        <dbReference type="ChEBI" id="CHEBI:61557"/>
        <dbReference type="ChEBI" id="CHEBI:140395"/>
        <dbReference type="EC" id="2.7.7.6"/>
    </reaction>
    <physiologicalReaction direction="left-to-right" evidence="12 13 14">
        <dbReference type="Rhea" id="RHEA:21249"/>
    </physiologicalReaction>
</comment>
<comment type="subunit">
    <text evidence="1 2 3 7 8 9">Component of the RNA polymerase I (Pol I) complex consisting of 14 subunits: RPA135, RPA190, RPC40, RPA14, RPB5, RPO26, RPA43, RPB8, RPA12, RPB10, RPC19, RPC10, RPA49 and RPA34. The complex is composed of a horseshoe-shaped core containing ten subunits (RPA135, RPA190, RPB5, RPO26, RPB8, RPB10, RPC10, RPA12, RPC19 and RPC40) where RPA135 and RPA190 form the DNA-binding cleft. Outside of the core, RPA14 and RPA43 form the stalk that mediates interactions with transcription initiation factors and newly synthesized RNA.</text>
</comment>
<comment type="interaction">
    <interactant intactId="EBI-15736">
        <id>P22138</id>
    </interactant>
    <interactant intactId="EBI-15730">
        <id>P10964</id>
        <label>RPA190</label>
    </interactant>
    <organismsDiffer>false</organismsDiffer>
    <experiments>5</experiments>
</comment>
<comment type="interaction">
    <interactant intactId="EBI-15736">
        <id>P22138</id>
    </interactant>
    <interactant intactId="EBI-15802">
        <id>P22139</id>
        <label>RPB10</label>
    </interactant>
    <organismsDiffer>false</organismsDiffer>
    <experiments>2</experiments>
</comment>
<comment type="interaction">
    <interactant intactId="EBI-15736">
        <id>P22138</id>
    </interactant>
    <interactant intactId="EBI-15781">
        <id>P20434</id>
        <label>RPB5</label>
    </interactant>
    <organismsDiffer>false</organismsDiffer>
    <experiments>3</experiments>
</comment>
<comment type="subcellular location">
    <subcellularLocation>
        <location evidence="4 5">Nucleus</location>
        <location evidence="4 5">Nucleolus</location>
    </subcellularLocation>
</comment>
<comment type="miscellaneous">
    <text>Three distinct zinc-containing RNA polymerases are found in eukaryotic nuclei: polymerase I for the ribosomal RNA precursor, polymerase II for the mRNA precursor, and polymerase III for 5S and tRNA genes.</text>
</comment>
<comment type="miscellaneous">
    <text evidence="6">Present with 14100 molecules/cell in log phase SD medium.</text>
</comment>
<comment type="similarity">
    <text evidence="10">Belongs to the RNA polymerase beta chain family.</text>
</comment>
<sequence length="1203" mass="135742">MSKVIKPPGQARTADFRTLERESRFINPPKDKSAFPLLQEAVQPHIGSFNALTEGPDGGLLNLGVKDIGEKVIFDGKPLNSEDEISNSGYLGNKLSVSVEQVSIAKPMSNDGVSSAVERKVYPSESRQRLTSYRGKLLLKLKWSVNNGEENLFEVRDCGGLPVMLQSNRCHLNKMSPYELVQHKEESDEIGGYFIVNGIEKLIRMLIVQRRNHPMAIIRPSFANRGASYSHYGIQIRSVRPDQTSQTNVLHYLNDGQVTFRFSWRKNEYLVPVVMILKALCHTSDREIFDGIIGNDVKDSFLTDRLELLLRGFKKRYPHLQNRTQVLQYLGDKFRVVFQASPDQSDLEVGQEVLDRIVLVHLGKDGSQDKFRMLLFMIRKLYSLVAGECSPDNPDATQHQEVLLGGFLYGMILKEKIDEYLQNIIAQVRMDINRGMAINFKDKRYMSRVLMRVNENIGSKMQYFLSTGNLVSQSGLDLQQVSGYTVVAEKINFYRFISHFRMVHRGSFFAQLKTTTVRKLLPESWGFLCPVHTPDGSPCGLLNHFAHKCRISTQQSDVSRIPSILYSLGVAPASHTFAAGPSLCCVQIDGKIIGWVSHEQGKIIADTLRYWKVEGKTPGLPIDLEIGYVPPSTRGQYPGLYLFGGHSRMLRPVRYLPLDKEDIVGPFEQVYMNIAVTPQEIQNNVHTHVEFTPTNILSILANLTPFSDFNQSPRNMYQCQMGKQTMGTPGVALCHRSDNKLYRLQTGQTPIVKANLYDDYGMDNFPNGFNAVVAVISYTGYDMDDAMIINKSADERGFGYGTMYKTEKVDLALNRNRGDPITQHFGFGNDEWPKEWLEKLDEDGLPYIGTYVEEGDPICAYFDDTLNKTKIKTYHSSEPAYIEEVNLIGDESNKFQELQTVSIKYRIRRTPQIGDKFSSRHGQKGVCSRKWPTIDMPFSETGIQPDIIINPHAFPSRMTIGMFVESLAGKAGALHGIAQDSTPWIFNEDDTPADYFGEQLAKAGYNYHGNEPMYSGATGEELRADIYVGVVYYQRLRHMVNDKFQVRSTGPVNSLTMQPVKGRKRHGGIRVGEMERDALIGHGTSFLLQDRLLNSSDYTQASVCRECGSILTTQQSVPRIGSISTVCCRRCSMRFEDAKKLLTKSEDGEKIFIDDSQIWEDGQGNKFVGGNETTTVAIPFVLKYLDSELSAMGIRLRYNVEPK</sequence>
<organism>
    <name type="scientific">Saccharomyces cerevisiae (strain ATCC 204508 / S288c)</name>
    <name type="common">Baker's yeast</name>
    <dbReference type="NCBI Taxonomy" id="559292"/>
    <lineage>
        <taxon>Eukaryota</taxon>
        <taxon>Fungi</taxon>
        <taxon>Dikarya</taxon>
        <taxon>Ascomycota</taxon>
        <taxon>Saccharomycotina</taxon>
        <taxon>Saccharomycetes</taxon>
        <taxon>Saccharomycetales</taxon>
        <taxon>Saccharomycetaceae</taxon>
        <taxon>Saccharomyces</taxon>
    </lineage>
</organism>
<evidence type="ECO:0000269" key="1">
    <source>
    </source>
</evidence>
<evidence type="ECO:0000269" key="2">
    <source>
    </source>
</evidence>
<evidence type="ECO:0000269" key="3">
    <source>
    </source>
</evidence>
<evidence type="ECO:0000269" key="4">
    <source>
    </source>
</evidence>
<evidence type="ECO:0000269" key="5">
    <source>
    </source>
</evidence>
<evidence type="ECO:0000269" key="6">
    <source>
    </source>
</evidence>
<evidence type="ECO:0000269" key="7">
    <source>
    </source>
</evidence>
<evidence type="ECO:0000269" key="8">
    <source>
    </source>
</evidence>
<evidence type="ECO:0000269" key="9">
    <source>
    </source>
</evidence>
<evidence type="ECO:0000305" key="10"/>
<evidence type="ECO:0000305" key="11">
    <source>
    </source>
</evidence>
<evidence type="ECO:0000305" key="12">
    <source>
    </source>
</evidence>
<evidence type="ECO:0000305" key="13">
    <source>
    </source>
</evidence>
<evidence type="ECO:0000305" key="14">
    <source>
    </source>
</evidence>
<evidence type="ECO:0007744" key="15">
    <source>
    </source>
</evidence>
<evidence type="ECO:0007744" key="16">
    <source>
    </source>
</evidence>
<evidence type="ECO:0007744" key="17">
    <source>
    </source>
</evidence>
<evidence type="ECO:0007829" key="18">
    <source>
        <dbReference type="PDB" id="4C2M"/>
    </source>
</evidence>
<evidence type="ECO:0007829" key="19">
    <source>
        <dbReference type="PDB" id="4C3I"/>
    </source>
</evidence>
<evidence type="ECO:0007829" key="20">
    <source>
        <dbReference type="PDB" id="5N61"/>
    </source>
</evidence>
<evidence type="ECO:0007829" key="21">
    <source>
        <dbReference type="PDB" id="6HLQ"/>
    </source>
</evidence>
<evidence type="ECO:0007829" key="22">
    <source>
        <dbReference type="PDB" id="6HLS"/>
    </source>
</evidence>
<evidence type="ECO:0007829" key="23">
    <source>
        <dbReference type="PDB" id="6RQL"/>
    </source>
</evidence>
<evidence type="ECO:0007829" key="24">
    <source>
        <dbReference type="PDB" id="6RRD"/>
    </source>
</evidence>
<evidence type="ECO:0007829" key="25">
    <source>
        <dbReference type="PDB" id="6RUI"/>
    </source>
</evidence>
<evidence type="ECO:0007829" key="26">
    <source>
        <dbReference type="PDB" id="6RUO"/>
    </source>
</evidence>
<evidence type="ECO:0007829" key="27">
    <source>
        <dbReference type="PDB" id="6RWE"/>
    </source>
</evidence>
<feature type="initiator methionine" description="Removed" evidence="17">
    <location>
        <position position="1"/>
    </location>
</feature>
<feature type="chain" id="PRO_0000048080" description="DNA-directed RNA polymerase I subunit RPA135">
    <location>
        <begin position="2"/>
        <end position="1203"/>
    </location>
</feature>
<feature type="zinc finger region" description="C4-type" evidence="11">
    <location>
        <begin position="1104"/>
        <end position="1131"/>
    </location>
</feature>
<feature type="modified residue" description="N-acetylserine" evidence="17">
    <location>
        <position position="2"/>
    </location>
</feature>
<feature type="modified residue" description="Phosphoserine" evidence="15 16">
    <location>
        <position position="81"/>
    </location>
</feature>
<feature type="modified residue" description="Phosphoserine" evidence="16">
    <location>
        <position position="1156"/>
    </location>
</feature>
<feature type="mutagenesis site" description="No effect; when associated with A-1107; A-1128 and A-1131." evidence="4">
    <original>C</original>
    <variation>A</variation>
    <location>
        <position position="1104"/>
    </location>
</feature>
<feature type="mutagenesis site" description="Lethal. Abolishes recruitment of RPA1 to Pol I. No effect; when associated with A-1104; A-1128 and A-1131." evidence="4">
    <original>C</original>
    <variation>A</variation>
    <location>
        <position position="1107"/>
    </location>
</feature>
<feature type="mutagenesis site" description="Responsible of suppression of RPA190-5 and RPA190-1 mutations.">
    <original>C</original>
    <variation>R</variation>
    <location>
        <position position="1127"/>
    </location>
</feature>
<feature type="mutagenesis site" description="No effect; when associated with A-1104; A-1107 and A-1131." evidence="4">
    <original>C</original>
    <variation>A</variation>
    <location>
        <position position="1128"/>
    </location>
</feature>
<feature type="mutagenesis site" description="No effect; when associated with A-1104; A-1107 and A-1128." evidence="4">
    <original>C</original>
    <variation>A</variation>
    <location>
        <position position="1131"/>
    </location>
</feature>
<feature type="strand" evidence="21">
    <location>
        <begin position="12"/>
        <end position="14"/>
    </location>
</feature>
<feature type="helix" evidence="25">
    <location>
        <begin position="18"/>
        <end position="26"/>
    </location>
</feature>
<feature type="strand" evidence="25">
    <location>
        <begin position="30"/>
        <end position="32"/>
    </location>
</feature>
<feature type="helix" evidence="25">
    <location>
        <begin position="36"/>
        <end position="39"/>
    </location>
</feature>
<feature type="strand" evidence="23">
    <location>
        <begin position="40"/>
        <end position="42"/>
    </location>
</feature>
<feature type="helix" evidence="25">
    <location>
        <begin position="43"/>
        <end position="50"/>
    </location>
</feature>
<feature type="turn" evidence="25">
    <location>
        <begin position="51"/>
        <end position="53"/>
    </location>
</feature>
<feature type="helix" evidence="25">
    <location>
        <begin position="56"/>
        <end position="58"/>
    </location>
</feature>
<feature type="turn" evidence="25">
    <location>
        <begin position="60"/>
        <end position="64"/>
    </location>
</feature>
<feature type="helix" evidence="27">
    <location>
        <begin position="65"/>
        <end position="67"/>
    </location>
</feature>
<feature type="strand" evidence="25">
    <location>
        <begin position="71"/>
        <end position="74"/>
    </location>
</feature>
<feature type="strand" evidence="25">
    <location>
        <begin position="83"/>
        <end position="85"/>
    </location>
</feature>
<feature type="turn" evidence="25">
    <location>
        <begin position="86"/>
        <end position="88"/>
    </location>
</feature>
<feature type="strand" evidence="25">
    <location>
        <begin position="94"/>
        <end position="104"/>
    </location>
</feature>
<feature type="strand" evidence="19">
    <location>
        <begin position="108"/>
        <end position="111"/>
    </location>
</feature>
<feature type="strand" evidence="19">
    <location>
        <begin position="117"/>
        <end position="120"/>
    </location>
</feature>
<feature type="helix" evidence="25">
    <location>
        <begin position="123"/>
        <end position="129"/>
    </location>
</feature>
<feature type="strand" evidence="25">
    <location>
        <begin position="134"/>
        <end position="145"/>
    </location>
</feature>
<feature type="turn" evidence="25">
    <location>
        <begin position="146"/>
        <end position="149"/>
    </location>
</feature>
<feature type="strand" evidence="25">
    <location>
        <begin position="150"/>
        <end position="152"/>
    </location>
</feature>
<feature type="strand" evidence="25">
    <location>
        <begin position="155"/>
        <end position="162"/>
    </location>
</feature>
<feature type="strand" evidence="27">
    <location>
        <begin position="167"/>
        <end position="170"/>
    </location>
</feature>
<feature type="turn" evidence="25">
    <location>
        <begin position="171"/>
        <end position="174"/>
    </location>
</feature>
<feature type="helix" evidence="25">
    <location>
        <begin position="177"/>
        <end position="182"/>
    </location>
</feature>
<feature type="strand" evidence="25">
    <location>
        <begin position="194"/>
        <end position="196"/>
    </location>
</feature>
<feature type="strand" evidence="25">
    <location>
        <begin position="199"/>
        <end position="203"/>
    </location>
</feature>
<feature type="strand" evidence="25">
    <location>
        <begin position="205"/>
        <end position="209"/>
    </location>
</feature>
<feature type="strand" evidence="20">
    <location>
        <begin position="211"/>
        <end position="213"/>
    </location>
</feature>
<feature type="strand" evidence="25">
    <location>
        <begin position="215"/>
        <end position="218"/>
    </location>
</feature>
<feature type="helix" evidence="25">
    <location>
        <begin position="220"/>
        <end position="223"/>
    </location>
</feature>
<feature type="strand" evidence="25">
    <location>
        <begin position="229"/>
        <end position="239"/>
    </location>
</feature>
<feature type="turn" evidence="26">
    <location>
        <begin position="241"/>
        <end position="243"/>
    </location>
</feature>
<feature type="strand" evidence="25">
    <location>
        <begin position="245"/>
        <end position="253"/>
    </location>
</feature>
<feature type="strand" evidence="25">
    <location>
        <begin position="258"/>
        <end position="266"/>
    </location>
</feature>
<feature type="strand" evidence="25">
    <location>
        <begin position="268"/>
        <end position="272"/>
    </location>
</feature>
<feature type="helix" evidence="25">
    <location>
        <begin position="273"/>
        <end position="280"/>
    </location>
</feature>
<feature type="helix" evidence="25">
    <location>
        <begin position="285"/>
        <end position="292"/>
    </location>
</feature>
<feature type="strand" evidence="23">
    <location>
        <begin position="293"/>
        <end position="295"/>
    </location>
</feature>
<feature type="helix" evidence="20">
    <location>
        <begin position="296"/>
        <end position="298"/>
    </location>
</feature>
<feature type="helix" evidence="25">
    <location>
        <begin position="300"/>
        <end position="316"/>
    </location>
</feature>
<feature type="helix" evidence="25">
    <location>
        <begin position="323"/>
        <end position="333"/>
    </location>
</feature>
<feature type="turn" evidence="25">
    <location>
        <begin position="334"/>
        <end position="339"/>
    </location>
</feature>
<feature type="strand" evidence="19">
    <location>
        <begin position="342"/>
        <end position="344"/>
    </location>
</feature>
<feature type="helix" evidence="25">
    <location>
        <begin position="346"/>
        <end position="356"/>
    </location>
</feature>
<feature type="turn" evidence="25">
    <location>
        <begin position="357"/>
        <end position="361"/>
    </location>
</feature>
<feature type="turn" evidence="20">
    <location>
        <begin position="364"/>
        <end position="366"/>
    </location>
</feature>
<feature type="helix" evidence="25">
    <location>
        <begin position="367"/>
        <end position="385"/>
    </location>
</feature>
<feature type="strand" evidence="19">
    <location>
        <begin position="387"/>
        <end position="389"/>
    </location>
</feature>
<feature type="strand" evidence="25">
    <location>
        <begin position="396"/>
        <end position="403"/>
    </location>
</feature>
<feature type="helix" evidence="25">
    <location>
        <begin position="405"/>
        <end position="432"/>
    </location>
</feature>
<feature type="turn" evidence="25">
    <location>
        <begin position="433"/>
        <end position="435"/>
    </location>
</feature>
<feature type="helix" evidence="25">
    <location>
        <begin position="443"/>
        <end position="450"/>
    </location>
</feature>
<feature type="helix" evidence="25">
    <location>
        <begin position="457"/>
        <end position="467"/>
    </location>
</feature>
<feature type="strand" evidence="24">
    <location>
        <begin position="477"/>
        <end position="479"/>
    </location>
</feature>
<feature type="strand" evidence="25">
    <location>
        <begin position="485"/>
        <end position="487"/>
    </location>
</feature>
<feature type="helix" evidence="25">
    <location>
        <begin position="493"/>
        <end position="497"/>
    </location>
</feature>
<feature type="turn" evidence="25">
    <location>
        <begin position="498"/>
        <end position="500"/>
    </location>
</feature>
<feature type="strand" evidence="25">
    <location>
        <begin position="501"/>
        <end position="504"/>
    </location>
</feature>
<feature type="helix" evidence="25">
    <location>
        <begin position="507"/>
        <end position="509"/>
    </location>
</feature>
<feature type="turn" evidence="25">
    <location>
        <begin position="515"/>
        <end position="518"/>
    </location>
</feature>
<feature type="helix" evidence="25">
    <location>
        <begin position="522"/>
        <end position="524"/>
    </location>
</feature>
<feature type="turn" evidence="25">
    <location>
        <begin position="525"/>
        <end position="527"/>
    </location>
</feature>
<feature type="turn" evidence="18">
    <location>
        <begin position="537"/>
        <end position="541"/>
    </location>
</feature>
<feature type="strand" evidence="25">
    <location>
        <begin position="542"/>
        <end position="545"/>
    </location>
</feature>
<feature type="turn" evidence="19">
    <location>
        <begin position="558"/>
        <end position="560"/>
    </location>
</feature>
<feature type="helix" evidence="25">
    <location>
        <begin position="561"/>
        <end position="567"/>
    </location>
</feature>
<feature type="helix" evidence="25">
    <location>
        <begin position="573"/>
        <end position="575"/>
    </location>
</feature>
<feature type="strand" evidence="25">
    <location>
        <begin position="583"/>
        <end position="588"/>
    </location>
</feature>
<feature type="strand" evidence="25">
    <location>
        <begin position="591"/>
        <end position="596"/>
    </location>
</feature>
<feature type="helix" evidence="25">
    <location>
        <begin position="598"/>
        <end position="613"/>
    </location>
</feature>
<feature type="turn" evidence="27">
    <location>
        <begin position="614"/>
        <end position="616"/>
    </location>
</feature>
<feature type="strand" evidence="19">
    <location>
        <begin position="618"/>
        <end position="620"/>
    </location>
</feature>
<feature type="strand" evidence="25">
    <location>
        <begin position="625"/>
        <end position="629"/>
    </location>
</feature>
<feature type="strand" evidence="25">
    <location>
        <begin position="633"/>
        <end position="636"/>
    </location>
</feature>
<feature type="strand" evidence="25">
    <location>
        <begin position="639"/>
        <end position="643"/>
    </location>
</feature>
<feature type="strand" evidence="20">
    <location>
        <begin position="645"/>
        <end position="647"/>
    </location>
</feature>
<feature type="strand" evidence="25">
    <location>
        <begin position="649"/>
        <end position="655"/>
    </location>
</feature>
<feature type="turn" evidence="25">
    <location>
        <begin position="656"/>
        <end position="659"/>
    </location>
</feature>
<feature type="strand" evidence="25">
    <location>
        <begin position="660"/>
        <end position="664"/>
    </location>
</feature>
<feature type="turn" evidence="25">
    <location>
        <begin position="666"/>
        <end position="668"/>
    </location>
</feature>
<feature type="helix" evidence="25">
    <location>
        <begin position="669"/>
        <end position="671"/>
    </location>
</feature>
<feature type="strand" evidence="25">
    <location>
        <begin position="674"/>
        <end position="677"/>
    </location>
</feature>
<feature type="helix" evidence="25">
    <location>
        <begin position="678"/>
        <end position="680"/>
    </location>
</feature>
<feature type="turn" evidence="25">
    <location>
        <begin position="683"/>
        <end position="685"/>
    </location>
</feature>
<feature type="strand" evidence="25">
    <location>
        <begin position="687"/>
        <end position="689"/>
    </location>
</feature>
<feature type="helix" evidence="25">
    <location>
        <begin position="693"/>
        <end position="696"/>
    </location>
</feature>
<feature type="strand" evidence="25">
    <location>
        <begin position="702"/>
        <end position="704"/>
    </location>
</feature>
<feature type="helix" evidence="25">
    <location>
        <begin position="707"/>
        <end position="709"/>
    </location>
</feature>
<feature type="helix" evidence="25">
    <location>
        <begin position="712"/>
        <end position="721"/>
    </location>
</feature>
<feature type="helix" evidence="25">
    <location>
        <begin position="722"/>
        <end position="724"/>
    </location>
</feature>
<feature type="helix" evidence="25">
    <location>
        <begin position="733"/>
        <end position="735"/>
    </location>
</feature>
<feature type="strand" evidence="25">
    <location>
        <begin position="739"/>
        <end position="746"/>
    </location>
</feature>
<feature type="strand" evidence="25">
    <location>
        <begin position="751"/>
        <end position="753"/>
    </location>
</feature>
<feature type="helix" evidence="25">
    <location>
        <begin position="756"/>
        <end position="759"/>
    </location>
</feature>
<feature type="helix" evidence="25">
    <location>
        <begin position="762"/>
        <end position="764"/>
    </location>
</feature>
<feature type="strand" evidence="25">
    <location>
        <begin position="768"/>
        <end position="775"/>
    </location>
</feature>
<feature type="strand" evidence="18">
    <location>
        <begin position="779"/>
        <end position="781"/>
    </location>
</feature>
<feature type="strand" evidence="25">
    <location>
        <begin position="784"/>
        <end position="790"/>
    </location>
</feature>
<feature type="helix" evidence="25">
    <location>
        <begin position="791"/>
        <end position="795"/>
    </location>
</feature>
<feature type="turn" evidence="25">
    <location>
        <begin position="796"/>
        <end position="799"/>
    </location>
</feature>
<feature type="strand" evidence="25">
    <location>
        <begin position="801"/>
        <end position="814"/>
    </location>
</feature>
<feature type="strand" evidence="25">
    <location>
        <begin position="817"/>
        <end position="819"/>
    </location>
</feature>
<feature type="strand" evidence="25">
    <location>
        <begin position="823"/>
        <end position="826"/>
    </location>
</feature>
<feature type="strand" evidence="23">
    <location>
        <begin position="829"/>
        <end position="831"/>
    </location>
</feature>
<feature type="helix" evidence="25">
    <location>
        <begin position="836"/>
        <end position="838"/>
    </location>
</feature>
<feature type="strand" evidence="25">
    <location>
        <begin position="844"/>
        <end position="846"/>
    </location>
</feature>
<feature type="strand" evidence="25">
    <location>
        <begin position="856"/>
        <end position="863"/>
    </location>
</feature>
<feature type="turn" evidence="25">
    <location>
        <begin position="864"/>
        <end position="867"/>
    </location>
</feature>
<feature type="strand" evidence="25">
    <location>
        <begin position="868"/>
        <end position="873"/>
    </location>
</feature>
<feature type="strand" evidence="27">
    <location>
        <begin position="876"/>
        <end position="878"/>
    </location>
</feature>
<feature type="strand" evidence="25">
    <location>
        <begin position="880"/>
        <end position="888"/>
    </location>
</feature>
<feature type="strand" evidence="25">
    <location>
        <begin position="891"/>
        <end position="893"/>
    </location>
</feature>
<feature type="strand" evidence="26">
    <location>
        <begin position="894"/>
        <end position="896"/>
    </location>
</feature>
<feature type="strand" evidence="25">
    <location>
        <begin position="900"/>
        <end position="909"/>
    </location>
</feature>
<feature type="strand" evidence="25">
    <location>
        <begin position="916"/>
        <end position="919"/>
    </location>
</feature>
<feature type="strand" evidence="21">
    <location>
        <begin position="920"/>
        <end position="922"/>
    </location>
</feature>
<feature type="strand" evidence="25">
    <location>
        <begin position="924"/>
        <end position="931"/>
    </location>
</feature>
<feature type="helix" evidence="25">
    <location>
        <begin position="933"/>
        <end position="935"/>
    </location>
</feature>
<feature type="strand" evidence="25">
    <location>
        <begin position="938"/>
        <end position="941"/>
    </location>
</feature>
<feature type="strand" evidence="25">
    <location>
        <begin position="946"/>
        <end position="949"/>
    </location>
</feature>
<feature type="helix" evidence="25">
    <location>
        <begin position="951"/>
        <end position="953"/>
    </location>
</feature>
<feature type="turn" evidence="25">
    <location>
        <begin position="955"/>
        <end position="957"/>
    </location>
</feature>
<feature type="helix" evidence="25">
    <location>
        <begin position="961"/>
        <end position="975"/>
    </location>
</feature>
<feature type="strand" evidence="23">
    <location>
        <begin position="978"/>
        <end position="980"/>
    </location>
</feature>
<feature type="strand" evidence="23">
    <location>
        <begin position="985"/>
        <end position="987"/>
    </location>
</feature>
<feature type="strand" evidence="25">
    <location>
        <begin position="988"/>
        <end position="990"/>
    </location>
</feature>
<feature type="helix" evidence="25">
    <location>
        <begin position="992"/>
        <end position="1003"/>
    </location>
</feature>
<feature type="strand" evidence="25">
    <location>
        <begin position="1009"/>
        <end position="1011"/>
    </location>
</feature>
<feature type="turn" evidence="25">
    <location>
        <begin position="1016"/>
        <end position="1018"/>
    </location>
</feature>
<feature type="strand" evidence="25">
    <location>
        <begin position="1026"/>
        <end position="1037"/>
    </location>
</feature>
<feature type="helix" evidence="25">
    <location>
        <begin position="1041"/>
        <end position="1043"/>
    </location>
</feature>
<feature type="strand" evidence="25">
    <location>
        <begin position="1045"/>
        <end position="1049"/>
    </location>
</feature>
<feature type="turn" evidence="25">
    <location>
        <begin position="1054"/>
        <end position="1056"/>
    </location>
</feature>
<feature type="turn" evidence="25">
    <location>
        <begin position="1063"/>
        <end position="1066"/>
    </location>
</feature>
<feature type="strand" evidence="25">
    <location>
        <begin position="1069"/>
        <end position="1071"/>
    </location>
</feature>
<feature type="helix" evidence="25">
    <location>
        <begin position="1073"/>
        <end position="1081"/>
    </location>
</feature>
<feature type="helix" evidence="25">
    <location>
        <begin position="1085"/>
        <end position="1092"/>
    </location>
</feature>
<feature type="turn" evidence="25">
    <location>
        <begin position="1093"/>
        <end position="1096"/>
    </location>
</feature>
<feature type="strand" evidence="25">
    <location>
        <begin position="1098"/>
        <end position="1104"/>
    </location>
</feature>
<feature type="turn" evidence="25">
    <location>
        <begin position="1105"/>
        <end position="1108"/>
    </location>
</feature>
<feature type="strand" evidence="21">
    <location>
        <begin position="1109"/>
        <end position="1112"/>
    </location>
</feature>
<feature type="strand" evidence="25">
    <location>
        <begin position="1113"/>
        <end position="1115"/>
    </location>
</feature>
<feature type="strand" evidence="19">
    <location>
        <begin position="1120"/>
        <end position="1122"/>
    </location>
</feature>
<feature type="strand" evidence="25">
    <location>
        <begin position="1126"/>
        <end position="1129"/>
    </location>
</feature>
<feature type="strand" evidence="25">
    <location>
        <begin position="1133"/>
        <end position="1136"/>
    </location>
</feature>
<feature type="strand" evidence="25">
    <location>
        <begin position="1155"/>
        <end position="1160"/>
    </location>
</feature>
<feature type="strand" evidence="21">
    <location>
        <begin position="1162"/>
        <end position="1164"/>
    </location>
</feature>
<feature type="strand" evidence="25">
    <location>
        <begin position="1166"/>
        <end position="1168"/>
    </location>
</feature>
<feature type="strand" evidence="25">
    <location>
        <begin position="1173"/>
        <end position="1179"/>
    </location>
</feature>
<feature type="helix" evidence="25">
    <location>
        <begin position="1181"/>
        <end position="1190"/>
    </location>
</feature>
<feature type="turn" evidence="25">
    <location>
        <begin position="1191"/>
        <end position="1193"/>
    </location>
</feature>
<feature type="strand" evidence="25">
    <location>
        <begin position="1194"/>
        <end position="1198"/>
    </location>
</feature>
<feature type="strand" evidence="22">
    <location>
        <begin position="1199"/>
        <end position="1201"/>
    </location>
</feature>
<name>RPA2_YEAST</name>
<keyword id="KW-0002">3D-structure</keyword>
<keyword id="KW-0007">Acetylation</keyword>
<keyword id="KW-0903">Direct protein sequencing</keyword>
<keyword id="KW-0240">DNA-directed RNA polymerase</keyword>
<keyword id="KW-0479">Metal-binding</keyword>
<keyword id="KW-0548">Nucleotidyltransferase</keyword>
<keyword id="KW-0539">Nucleus</keyword>
<keyword id="KW-0597">Phosphoprotein</keyword>
<keyword id="KW-1185">Reference proteome</keyword>
<keyword id="KW-0690">Ribosome biogenesis</keyword>
<keyword id="KW-0804">Transcription</keyword>
<keyword id="KW-0808">Transferase</keyword>
<keyword id="KW-0862">Zinc</keyword>
<keyword id="KW-0863">Zinc-finger</keyword>
<proteinExistence type="evidence at protein level"/>
<gene>
    <name type="primary">RPA135</name>
    <name type="synonym">RPA2</name>
    <name type="synonym">RRN2</name>
    <name type="synonym">SRP3</name>
    <name type="ordered locus">YPR010C</name>
    <name type="ORF">YP9531.03C</name>
</gene>
<protein>
    <recommendedName>
        <fullName>DNA-directed RNA polymerase I subunit RPA135</fullName>
        <ecNumber evidence="7 8 9">2.7.7.6</ecNumber>
    </recommendedName>
    <alternativeName>
        <fullName>DNA-directed RNA polymerase I 135 kDa polypeptide</fullName>
        <shortName>A135</shortName>
    </alternativeName>
    <alternativeName>
        <fullName>DNA-directed RNA polymerase I polypeptide 2</fullName>
        <shortName>RNA polymerase I subunit 2</shortName>
    </alternativeName>
</protein>
<accession>P22138</accession>
<accession>D6W421</accession>